<keyword id="KW-0002">3D-structure</keyword>
<keyword id="KW-0067">ATP-binding</keyword>
<keyword id="KW-0255">Endonuclease</keyword>
<keyword id="KW-0347">Helicase</keyword>
<keyword id="KW-1035">Host cytoplasm</keyword>
<keyword id="KW-1038">Host endoplasmic reticulum</keyword>
<keyword id="KW-1043">Host membrane</keyword>
<keyword id="KW-1048">Host nucleus</keyword>
<keyword id="KW-0945">Host-virus interaction</keyword>
<keyword id="KW-0378">Hydrolase</keyword>
<keyword id="KW-1090">Inhibition of host innate immune response by virus</keyword>
<keyword id="KW-1114">Inhibition of host interferon signaling pathway by virus</keyword>
<keyword id="KW-1095">Inhibition of host ISG15 by virus</keyword>
<keyword id="KW-1100">Inhibition of host NF-kappa-B by virus</keyword>
<keyword id="KW-1102">Inhibition of host PKR by virus</keyword>
<keyword id="KW-1105">Inhibition of host STAT1 by virus</keyword>
<keyword id="KW-0922">Interferon antiviral system evasion</keyword>
<keyword id="KW-0456">Lyase</keyword>
<keyword id="KW-0472">Membrane</keyword>
<keyword id="KW-0479">Metal-binding</keyword>
<keyword id="KW-1127">Modulation of host ubiquitin pathway by viral deubiquitinase</keyword>
<keyword id="KW-1130">Modulation of host ubiquitin pathway by virus</keyword>
<keyword id="KW-0511">Multifunctional enzyme</keyword>
<keyword id="KW-0540">Nuclease</keyword>
<keyword id="KW-0547">Nucleotide-binding</keyword>
<keyword id="KW-0548">Nucleotidyltransferase</keyword>
<keyword id="KW-0645">Protease</keyword>
<keyword id="KW-0688">Ribosomal frameshifting</keyword>
<keyword id="KW-0696">RNA-directed RNA polymerase</keyword>
<keyword id="KW-0720">Serine protease</keyword>
<keyword id="KW-0788">Thiol protease</keyword>
<keyword id="KW-0808">Transferase</keyword>
<keyword id="KW-0812">Transmembrane</keyword>
<keyword id="KW-1133">Transmembrane helix</keyword>
<keyword id="KW-0899">Viral immunoevasion</keyword>
<keyword id="KW-0693">Viral RNA replication</keyword>
<keyword id="KW-0862">Zinc</keyword>
<keyword id="KW-0863">Zinc-finger</keyword>
<name>RPOA_PRRS1</name>
<feature type="chain" id="PRO_0000036657" description="Replicase polyprotein 1ab">
    <location>
        <begin position="1"/>
        <end position="3961"/>
    </location>
</feature>
<feature type="chain" id="PRO_0000410826" description="Nsp1" evidence="1">
    <location>
        <begin position="1"/>
        <end position="382"/>
    </location>
</feature>
<feature type="chain" id="PRO_0000036659" description="Nsp1-alpha papain-like cysteine proteinase" evidence="1">
    <location>
        <begin position="1"/>
        <end position="180"/>
    </location>
</feature>
<feature type="chain" id="PRO_0000036660" description="Nsp1-beta papain-like cysteine proteinase" evidence="1">
    <location>
        <begin position="181"/>
        <end position="383"/>
    </location>
</feature>
<feature type="chain" id="PRO_0000036661" description="Nsp2 cysteine proteinase" evidence="8">
    <location>
        <begin position="384"/>
        <end position="1579"/>
    </location>
</feature>
<feature type="chain" id="PRO_0000036662" description="Non-structural protein 3" evidence="1">
    <location>
        <begin position="1580"/>
        <end position="1809"/>
    </location>
</feature>
<feature type="chain" id="PRO_0000036663" description="Serine protease nsp4" evidence="1">
    <location>
        <begin position="1810"/>
        <end position="2013"/>
    </location>
</feature>
<feature type="chain" id="PRO_0000036664" description="Non-structural protein 5-6-7" evidence="1">
    <location>
        <begin position="2014"/>
        <end position="2458"/>
    </location>
</feature>
<feature type="chain" id="PRO_0000423118" description="Non-structural protein 5" evidence="1">
    <location>
        <begin position="2014"/>
        <end position="2183"/>
    </location>
</feature>
<feature type="chain" id="PRO_0000423119" description="Non-structural protein 6" evidence="1">
    <location>
        <begin position="2184"/>
        <end position="2199"/>
    </location>
</feature>
<feature type="chain" id="PRO_0000423120" description="Non-structural protein 7-alpha" evidence="1">
    <location>
        <begin position="2200"/>
        <end position="2348"/>
    </location>
</feature>
<feature type="chain" id="PRO_0000423121" description="Non-structural protein 7-beta" evidence="1">
    <location>
        <begin position="2349"/>
        <end position="2458"/>
    </location>
</feature>
<feature type="chain" id="PRO_0000036665" description="RNA-directed RNA polymerase" evidence="1">
    <location>
        <begin position="2459"/>
        <end position="3144"/>
    </location>
</feature>
<feature type="chain" id="PRO_0000036666" description="Non-structural protein 8" evidence="1">
    <location>
        <begin position="2459"/>
        <end position="2503"/>
    </location>
</feature>
<feature type="chain" id="PRO_0000036667" description="Helicase nsp10" evidence="1">
    <location>
        <begin position="3145"/>
        <end position="3585"/>
    </location>
</feature>
<feature type="chain" id="PRO_0000036668" description="Uridylate-specific endoribonuclease nsp11" evidence="1">
    <location>
        <begin position="3586"/>
        <end position="3808"/>
    </location>
</feature>
<feature type="chain" id="PRO_0000036669" description="Non-structural protein 12" evidence="1">
    <location>
        <begin position="3809"/>
        <end position="3961"/>
    </location>
</feature>
<feature type="transmembrane region" description="Helical" evidence="8">
    <location>
        <begin position="1266"/>
        <end position="1286"/>
    </location>
</feature>
<feature type="transmembrane region" description="Helical" evidence="8">
    <location>
        <begin position="1296"/>
        <end position="1316"/>
    </location>
</feature>
<feature type="transmembrane region" description="Helical" evidence="8">
    <location>
        <begin position="1345"/>
        <end position="1365"/>
    </location>
</feature>
<feature type="transmembrane region" description="Helical" evidence="8">
    <location>
        <begin position="1368"/>
        <end position="1388"/>
    </location>
</feature>
<feature type="transmembrane region" description="Helical" evidence="8">
    <location>
        <begin position="1583"/>
        <end position="1603"/>
    </location>
</feature>
<feature type="transmembrane region" description="Helical" evidence="8">
    <location>
        <begin position="1650"/>
        <end position="1670"/>
    </location>
</feature>
<feature type="transmembrane region" description="Helical" evidence="8">
    <location>
        <begin position="1685"/>
        <end position="1705"/>
    </location>
</feature>
<feature type="transmembrane region" description="Helical" evidence="8">
    <location>
        <begin position="1719"/>
        <end position="1739"/>
    </location>
</feature>
<feature type="transmembrane region" description="Helical" evidence="8">
    <location>
        <begin position="2012"/>
        <end position="2032"/>
    </location>
</feature>
<feature type="transmembrane region" description="Helical" evidence="8">
    <location>
        <begin position="2060"/>
        <end position="2080"/>
    </location>
</feature>
<feature type="transmembrane region" description="Helical" evidence="8">
    <location>
        <begin position="2092"/>
        <end position="2112"/>
    </location>
</feature>
<feature type="transmembrane region" description="Helical" evidence="8">
    <location>
        <begin position="2137"/>
        <end position="2157"/>
    </location>
</feature>
<feature type="transmembrane region" description="Helical" evidence="8">
    <location>
        <begin position="2164"/>
        <end position="2184"/>
    </location>
</feature>
<feature type="domain" description="Peptidase C31" evidence="12">
    <location>
        <begin position="69"/>
        <end position="180"/>
    </location>
</feature>
<feature type="domain" description="Peptidase C32" evidence="13">
    <location>
        <begin position="263"/>
        <end position="383"/>
    </location>
</feature>
<feature type="domain" description="Peptidase C33" evidence="11">
    <location>
        <begin position="428"/>
        <end position="535"/>
    </location>
</feature>
<feature type="domain" description="Peptidase S32" evidence="10">
    <location>
        <begin position="1810"/>
        <end position="2013"/>
    </location>
</feature>
<feature type="domain" description="NiRAN" evidence="15">
    <location>
        <begin position="2488"/>
        <end position="2651"/>
    </location>
</feature>
<feature type="domain" description="RdRp catalytic" evidence="9">
    <location>
        <begin position="2890"/>
        <end position="3024"/>
    </location>
</feature>
<feature type="domain" description="AV ZBD" evidence="14">
    <location>
        <begin position="3145"/>
        <end position="3208"/>
    </location>
</feature>
<feature type="domain" description="(+)RNA virus helicase ATP-binding">
    <location>
        <begin position="3265"/>
        <end position="3417"/>
    </location>
</feature>
<feature type="domain" description="(+)RNA virus helicase C-terminal">
    <location>
        <begin position="3418"/>
        <end position="3546"/>
    </location>
</feature>
<feature type="domain" description="AV-Nsp11N/CoV-Nsp15M" evidence="17">
    <location>
        <begin position="3585"/>
        <end position="3681"/>
    </location>
</feature>
<feature type="domain" description="NendoU" evidence="16">
    <location>
        <begin position="3683"/>
        <end position="3805"/>
    </location>
</feature>
<feature type="zinc finger region" description="C4-type; atypical">
    <location>
        <begin position="8"/>
        <end position="28"/>
    </location>
</feature>
<feature type="region of interest" description="PCP1-alpha">
    <location>
        <begin position="69"/>
        <end position="182"/>
    </location>
</feature>
<feature type="region of interest" description="Important for host EIF2AK2 inhibition" evidence="3">
    <location>
        <begin position="199"/>
        <end position="200"/>
    </location>
</feature>
<feature type="region of interest" description="PCP1-beta">
    <location>
        <begin position="263"/>
        <end position="382"/>
    </location>
</feature>
<feature type="region of interest" description="OTU-like">
    <location>
        <begin position="426"/>
        <end position="513"/>
    </location>
</feature>
<feature type="region of interest" description="Disordered" evidence="18">
    <location>
        <begin position="809"/>
        <end position="862"/>
    </location>
</feature>
<feature type="region of interest" description="Disordered" evidence="18">
    <location>
        <begin position="898"/>
        <end position="979"/>
    </location>
</feature>
<feature type="region of interest" description="Disordered" evidence="18">
    <location>
        <begin position="1153"/>
        <end position="1213"/>
    </location>
</feature>
<feature type="region of interest" description="HD1">
    <location>
        <begin position="1266"/>
        <end position="1388"/>
    </location>
</feature>
<feature type="region of interest" description="HD2">
    <location>
        <begin position="1583"/>
        <end position="1745"/>
    </location>
</feature>
<feature type="region of interest" description="HD3">
    <location>
        <begin position="2036"/>
        <end position="2157"/>
    </location>
</feature>
<feature type="region of interest" description="Disordered" evidence="18">
    <location>
        <begin position="2329"/>
        <end position="2358"/>
    </location>
</feature>
<feature type="compositionally biased region" description="Pro residues" evidence="18">
    <location>
        <begin position="810"/>
        <end position="819"/>
    </location>
</feature>
<feature type="compositionally biased region" description="Pro residues" evidence="18">
    <location>
        <begin position="2330"/>
        <end position="2344"/>
    </location>
</feature>
<feature type="active site" description="For Nsp1-alpha papain-like cysteine proteinase activity" evidence="12">
    <location>
        <position position="76"/>
    </location>
</feature>
<feature type="active site" description="For Nsp1-alpha papain-like cysteine proteinase activity" evidence="12">
    <location>
        <position position="146"/>
    </location>
</feature>
<feature type="active site" description="For Nsp1-beta papain-like cysteine proteinase activity" evidence="13">
    <location>
        <position position="270"/>
    </location>
</feature>
<feature type="active site" description="For Nsp1-beta papain-like cysteine proteinase activity" evidence="13">
    <location>
        <position position="339"/>
    </location>
</feature>
<feature type="active site" description="For Nsp2 cysteine proteinase activity" evidence="11">
    <location>
        <position position="437"/>
    </location>
</feature>
<feature type="active site" description="For Nsp2 cysteine proteinase activity" evidence="11">
    <location>
        <position position="506"/>
    </location>
</feature>
<feature type="active site" description="Charge relay system; for 3C-like serine proteinase activity" evidence="10">
    <location>
        <position position="1848"/>
    </location>
</feature>
<feature type="active site" description="Charge relay system; for 3C-like serine proteinase activity" evidence="10">
    <location>
        <position position="1873"/>
    </location>
</feature>
<feature type="active site" description="Charge relay system; for 3C-like serine proteinase activity" evidence="10">
    <location>
        <position position="1927"/>
    </location>
</feature>
<feature type="active site" evidence="16">
    <location>
        <position position="3714"/>
    </location>
</feature>
<feature type="active site" evidence="16">
    <location>
        <position position="3729"/>
    </location>
</feature>
<feature type="active site" evidence="16">
    <location>
        <position position="3758"/>
    </location>
</feature>
<feature type="binding site" evidence="14">
    <location>
        <position position="3151"/>
    </location>
    <ligand>
        <name>Zn(2+)</name>
        <dbReference type="ChEBI" id="CHEBI:29105"/>
        <label>1</label>
    </ligand>
</feature>
<feature type="binding site" evidence="14">
    <location>
        <position position="3154"/>
    </location>
    <ligand>
        <name>Zn(2+)</name>
        <dbReference type="ChEBI" id="CHEBI:29105"/>
        <label>1</label>
    </ligand>
</feature>
<feature type="binding site" evidence="14">
    <location>
        <position position="3164"/>
    </location>
    <ligand>
        <name>Zn(2+)</name>
        <dbReference type="ChEBI" id="CHEBI:29105"/>
        <label>2</label>
    </ligand>
</feature>
<feature type="binding site" evidence="14">
    <location>
        <position position="3169"/>
    </location>
    <ligand>
        <name>Zn(2+)</name>
        <dbReference type="ChEBI" id="CHEBI:29105"/>
        <label>1</label>
    </ligand>
</feature>
<feature type="binding site" evidence="14">
    <location>
        <position position="3172"/>
    </location>
    <ligand>
        <name>Zn(2+)</name>
        <dbReference type="ChEBI" id="CHEBI:29105"/>
        <label>1</label>
    </ligand>
</feature>
<feature type="binding site" evidence="14">
    <location>
        <position position="3174"/>
    </location>
    <ligand>
        <name>Zn(2+)</name>
        <dbReference type="ChEBI" id="CHEBI:29105"/>
        <label>2</label>
    </ligand>
</feature>
<feature type="binding site" evidence="14">
    <location>
        <position position="3176"/>
    </location>
    <ligand>
        <name>Zn(2+)</name>
        <dbReference type="ChEBI" id="CHEBI:29105"/>
        <label>2</label>
    </ligand>
</feature>
<feature type="binding site" evidence="14">
    <location>
        <position position="3178"/>
    </location>
    <ligand>
        <name>Zn(2+)</name>
        <dbReference type="ChEBI" id="CHEBI:29105"/>
        <label>2</label>
    </ligand>
</feature>
<feature type="binding site" evidence="14">
    <location>
        <position position="3185"/>
    </location>
    <ligand>
        <name>Zn(2+)</name>
        <dbReference type="ChEBI" id="CHEBI:29105"/>
        <label>3</label>
    </ligand>
</feature>
<feature type="binding site" evidence="14">
    <location>
        <position position="3187"/>
    </location>
    <ligand>
        <name>Zn(2+)</name>
        <dbReference type="ChEBI" id="CHEBI:29105"/>
        <label>3</label>
    </ligand>
</feature>
<feature type="binding site" evidence="14">
    <location>
        <position position="3194"/>
    </location>
    <ligand>
        <name>Zn(2+)</name>
        <dbReference type="ChEBI" id="CHEBI:29105"/>
        <label>3</label>
    </ligand>
</feature>
<feature type="binding site" evidence="14">
    <location>
        <position position="3197"/>
    </location>
    <ligand>
        <name>Zn(2+)</name>
        <dbReference type="ChEBI" id="CHEBI:29105"/>
        <label>3</label>
    </ligand>
</feature>
<feature type="binding site" evidence="1">
    <location>
        <begin position="3298"/>
        <end position="3305"/>
    </location>
    <ligand>
        <name>ATP</name>
        <dbReference type="ChEBI" id="CHEBI:30616"/>
    </ligand>
</feature>
<feature type="site" description="Cleavage; by autolysis" evidence="7">
    <location>
        <begin position="180"/>
        <end position="181"/>
    </location>
</feature>
<feature type="site" description="Cleavage; by autolysis" evidence="1">
    <location>
        <begin position="383"/>
        <end position="384"/>
    </location>
</feature>
<feature type="site" description="Cleavage; by CP2" evidence="2">
    <location>
        <begin position="1579"/>
        <end position="1580"/>
    </location>
</feature>
<feature type="site" description="Cleavage; by 3CLSP" evidence="2">
    <location>
        <begin position="1809"/>
        <end position="1810"/>
    </location>
</feature>
<feature type="site" description="Cleavage; by 3CLSP" evidence="2">
    <location>
        <begin position="2013"/>
        <end position="2014"/>
    </location>
</feature>
<feature type="site" description="Cleavage; by 3CLSP" evidence="2">
    <location>
        <begin position="2183"/>
        <end position="2184"/>
    </location>
</feature>
<feature type="site" description="Cleavage; by 3CLSP" evidence="2">
    <location>
        <begin position="2199"/>
        <end position="2200"/>
    </location>
</feature>
<feature type="site" description="Cleavage; by 3CLSP" evidence="2">
    <location>
        <begin position="2348"/>
        <end position="2349"/>
    </location>
</feature>
<feature type="site" description="Cleavage; by 3CLSP" evidence="2">
    <location>
        <begin position="2458"/>
        <end position="2459"/>
    </location>
</feature>
<feature type="site" description="Cleavage; by 3CLSP" evidence="2">
    <location>
        <begin position="2503"/>
        <end position="2504"/>
    </location>
</feature>
<feature type="site" description="Cleavage; by 3CLSP" evidence="2">
    <location>
        <begin position="3144"/>
        <end position="3145"/>
    </location>
</feature>
<feature type="site" description="Involved in mRNA transcription process" evidence="1">
    <location>
        <position position="3195"/>
    </location>
</feature>
<feature type="site" description="Cleavage; by 3CLSP" evidence="1">
    <location>
        <begin position="3585"/>
        <end position="3586"/>
    </location>
</feature>
<feature type="site" description="Cleavage; by 3CLSP" evidence="1">
    <location>
        <begin position="3808"/>
        <end position="3809"/>
    </location>
</feature>
<feature type="splice variant" id="VSP_032890" description="In isoform Replicase polyprotein 1a." evidence="19">
    <location>
        <begin position="2504"/>
        <end position="3961"/>
    </location>
</feature>
<feature type="helix" evidence="20">
    <location>
        <begin position="3592"/>
        <end position="3597"/>
    </location>
</feature>
<feature type="strand" evidence="20">
    <location>
        <begin position="3602"/>
        <end position="3605"/>
    </location>
</feature>
<feature type="strand" evidence="20">
    <location>
        <begin position="3609"/>
        <end position="3611"/>
    </location>
</feature>
<feature type="helix" evidence="20">
    <location>
        <begin position="3614"/>
        <end position="3619"/>
    </location>
</feature>
<feature type="strand" evidence="20">
    <location>
        <begin position="3622"/>
        <end position="3626"/>
    </location>
</feature>
<feature type="strand" evidence="20">
    <location>
        <begin position="3632"/>
        <end position="3640"/>
    </location>
</feature>
<feature type="strand" evidence="20">
    <location>
        <begin position="3647"/>
        <end position="3651"/>
    </location>
</feature>
<feature type="strand" evidence="20">
    <location>
        <begin position="3654"/>
        <end position="3656"/>
    </location>
</feature>
<feature type="strand" evidence="20">
    <location>
        <begin position="3659"/>
        <end position="3661"/>
    </location>
</feature>
<feature type="strand" evidence="20">
    <location>
        <begin position="3667"/>
        <end position="3676"/>
    </location>
</feature>
<feature type="strand" evidence="20">
    <location>
        <begin position="3679"/>
        <end position="3681"/>
    </location>
</feature>
<feature type="helix" evidence="20">
    <location>
        <begin position="3692"/>
        <end position="3695"/>
    </location>
</feature>
<feature type="helix" evidence="20">
    <location>
        <begin position="3703"/>
        <end position="3711"/>
    </location>
</feature>
<feature type="helix" evidence="20">
    <location>
        <begin position="3713"/>
        <end position="3716"/>
    </location>
</feature>
<feature type="strand" evidence="20">
    <location>
        <begin position="3719"/>
        <end position="3721"/>
    </location>
</feature>
<feature type="strand" evidence="20">
    <location>
        <begin position="3724"/>
        <end position="3726"/>
    </location>
</feature>
<feature type="strand" evidence="20">
    <location>
        <begin position="3742"/>
        <end position="3752"/>
    </location>
</feature>
<feature type="turn" evidence="20">
    <location>
        <begin position="3753"/>
        <end position="3755"/>
    </location>
</feature>
<feature type="strand" evidence="20">
    <location>
        <begin position="3756"/>
        <end position="3764"/>
    </location>
</feature>
<feature type="helix" evidence="20">
    <location>
        <begin position="3768"/>
        <end position="3774"/>
    </location>
</feature>
<feature type="strand" evidence="20">
    <location>
        <begin position="3778"/>
        <end position="3788"/>
    </location>
</feature>
<feature type="strand" evidence="20">
    <location>
        <begin position="3791"/>
        <end position="3798"/>
    </location>
</feature>
<feature type="turn" evidence="20">
    <location>
        <begin position="3799"/>
        <end position="3801"/>
    </location>
</feature>
<feature type="strand" evidence="20">
    <location>
        <begin position="3802"/>
        <end position="3806"/>
    </location>
</feature>
<sequence>MSGILDRCTCTPNARVFVAEGQVYCTRCLSARSLLPLNLQVSELGVLGLFYRPEEPLRWTLPRAFPTVECSPAGACWLSAIFPIARMTSGNLNFQQRMVRVAAEIYRAGQLTPAVLKALQVYERGCRWYPIVGPVPGVAVFANSLHVSDKPFPGATHVLTNLPLPQRPKPEDFCPFECAMATVYDIGHDAVMYVAEGKISWAPRGGDEVKFEAVPGELKLIANRLRTSFPPHHAVDMSKFAFTAPGCGVSMRVERQHGCLPADTVPEGNCWWSLFDLLPLEVQDKEIRHANQFGYQTKHGVSGKYLQRRLQVNGLRAVTDSNGPIVVQYFSVKESWIRHLKLAGEPSYSGFEDLLRIRVEPNTSPLANTEGKIFRFGSHKWYGAGKRARKARSCATATVAGRALSVRETRQAKEHEVAGADKAEHLKHYSPPAEGNCGWHCISAIANRMVNSIFETTLPERVRPPDDWATDDDLANAIQILRLPAALDRNGACTSAKYVLKLEGEHWTVTVTPGMSPSLLPLECVQGCCEHKGGLGSPDAIEVSGFDPACLDWLAEVMHLPSSAIPAALAEMSGDSDRSASPVTTVWTVSQFFARHSGGNHPDQVRLGKIISLCQVIEDCCCSQNKTNRVTPEEVAAKIDLYLRGATNLEECLARLEKARPPRVIDTSFDWDVVLPGVEAATQTNKLPQVNQCRALVPVVTQKSLDNNSVPLTAFSLANYYYRAQGDEVRHRERLTAVLSKLEEVVREEYGLMPTEPGPRPTLPRGLDELKDQMEEDLLRLANAQATSDMMAWAVEQVDLKTWVKNYPRWTPPPPPPKVQPRKTKPVKSLPERKPVPAPRRKVGPDCGSPVSLGGDVPNSWEDLAVSSPLDLPTPPEPATLSSELVIVSSPQCIFRPATPLSEPAPIPAPRGTVSRPVTPLSEPIPVPAPRRKFQQVKRLSSAAAVPLHQNEPLDLSASSQTEYEASPSAPPQSGGVLGVEGHEAEETLSEISDMSGNIKPASVSSSSSLSSVEITRPKYSAQAIIDSGGPCSGHLQGVKETCLSVMREACDATKLDDPATQEWLSRMWDRVDMLTWRNTSVCQAIRTLDGRLKFLPKMILETPPPYPCEFVMMPHTPAPSVGAESDLTIGSVATEDVPRILEKIENVGEMANQEPSAFSEDKPVDDQLVNDPRISSRRPDESTAAPSAGTGGAGSFTDLPSSDGADADGGGPFRTAKRKAERLFDQLSRQVFDLVSHLPVFFSRLFHPGGGYSTGDWGFAAFTLLCLFLCYSYPAFGIAPLLGVFSGTSRRVRMGVFGCWLAFAVGLFKPVSDPVGAACEFDSPECRNILLSFELLKPWDPVRSLVVGPVGLGLAILGRLLGGARCIWHFLLRLGIVADCILAGAYVLSQGRCKKCWGSCIRTAPNEVAFNVFPFTRATRSSLIDLCDRFCAPKGMDPIFLATGWRGCWAGRSPIEQPSEKPIAFAQLDEKKITARTVVAQPYDPNQAVKCLRVLQAGGAMVAEAVPKVVKVSAVPFRAPFFPTGVKVDPDCRVVVDPDTFTAALRSGYSTTNLVLGVGDFAQLNGLKIRQISKPSGGGPHLMAALHVACSMALHMLTGIYVTAVGSCGTGTNDPWCANPFAVPGYGPGSLCTSRLCISQHGLTLPLTALVAGFGIQEIALVVLIFVSIGGMAHRLSCKADMLCILLAIASYVWVPLTWLLCVFPCWLRCFSLHPLTILWLVFFLISVNMPSGILAMVLLVSLWLLGRYTNVAGLVTPYDIHHYTSGPRGVAALATAPDGTYLAAVRRAALTGRTMLFTPSQLGSLLEGAFRTRKPSLNTVNVIGSSMGSGGVFTIDGKVKCVTAAHVLTGNSARVSGVGFNQMLDFDVKGDFAIADCPNWQGAAPKAQFCADGWTGRAYWLTSSGVEPGVIGKGFAFCFTACGDSGSPVITEAGELVGVHTGSNKQGGGIVTRPSGQFCNVAPIKLSELSEFFAGPKVPLGDVKVGSHIIKDISEVPSDLCALLAAKPELEGGLSTVQLLCVFFLLWRMMGHAWTPLVAVSFFILNEVLPAVLVRSVFSFGMFVLSWLTPWSAQILMIRLLTAALNRNRWSLAFFSLGAVTGFVADLAATQGHPLQAVMNLSTYAFLPRMMVVTSPVPVITCGVVHLLAIILYLFKYRGLHQILVGDGVFSAAFFLRYFAEGKLREGVSQSCGMNHESLTGALAMRLNDEDLDFLMKWTDFKCFVSASNMRNAAGQFIEAAYAKALRVELAQLVQVDKVRGVLAKLEAFADTVAPQLSPGDIVVALGHTPVGSIFDLKVGSTKHTLQAIETRVLAGSKMTVARVVDPTPTPPPAPVPIPLPPKVLENGPNAWGDEDRLNKKKRRRMEALGIYVMGGKKYQKFWDKNSGDVFYEEVHNNTDEWECLRVGDPADFDPEKGTLCGHVTIENKAYHVYISPSGKKFLVPVNPENGRVQWEAAKLSMEQALGMMNVDGELTAKELEKLKRIIDKLQGLTKEQCLNCLLAASGLTRCGRGGLVVTETAVKIVKFHNRTFTLGPVNLKVASEVELKDAVEHNQHPVARPIDGGVVLLRSAVPSLIDVLISGADASPKLLAHHGPGNTGIDGTLWDFESEATKEEVALSAQIIQACDIRRGDAPKIGLPYKLYPVRGNPERVKGVLQNTRFGDIPYKTPSDTGSPVHAAACLTPNATPVTDGRSVLATTMPPGFELYVPTIPASVLDYLDSRPDCPKQLTEHGCEDAALKDLSKYDLSTQGFVLPGVLRLVRKYLFAHVGKCPPVHRPSTYPAKNSMAGINGNRFPTKDIQSVPEIDVLCAQAVRENWQTVTPCTLKKQYCGKKKTRTILGTNNFIALAHRAALSGVTQGFMKKAFNSPIALGKNKFKELQTSVLGRCLEADLASCDRSTPAIVRWFAANLLYELACAEEHLPSYVLNCCHDLLVTQSGAVTKRGGLSSGDPITSVSNTIYSLVIYAQHMVLSYFKSGHPHGLLFLQDQLKFEDMLKVQPLIVYSDDLVLYAESPTMPNYHWWVEHLNLMLGFQTDPKKTAITDSPSFLGCRIINGRQLVPNRDRILAALAYHMKASNVSEYYASAAAILMDSCACLEYDPEWFEELVVGIAQCARKDGYSFPGTPFFMSMWEKLRSNYEGKKSRVCGYCGAPAPYATACGLDVCIYHTHFHQHCPVTIWCGHPAGSGSCSECKSPVGKGTSPLDEVLEQVPYKPPRTVIMHVEQGLTPLDPGRYQTRRGLVSVRRGIRGNEVELPDGDYASTALLPTCKEINMVAVASNVLRSRFIIGPPGAGKTYWLLQQVQDGDVIYTPTHQTMLDMIRALGTCRFNVPAGTTLQFPVPSRTGPWVRILAGGWCPGKNSFLDEAAYCNHLDVLRLLSKTTLTCLGDFKQLHPVGFDSHCYVFDIMPQTQLKTIWRFGQNICDAIQPDYRDKLMSMVNTTRVTYVEKPVRYGQVLTPYHRDREDDAITIDSSQGATFDVVTLHLPTKDSLNRQRALVAITRARHAIFVYDPHRQLQGLFDLPAKGTPVNLAVHRDGQLIVLDRNNKECTVAQALGNGDKFRATDKRVVDSLRAICADLEGSSSPLPKVAHNLGFYFSPDLTQFAKLPVELAPHWPVVTTQNNEKWPDRLVASLRPIHKYSRACIGAGYMVGPSVFLGTPGVVSYYLTKFVKGEAQLLPETVFSTGRIEVDCREYLDDREREVAASLPHAFIGDVKGTTVGGCHHVTSRYLPRVLPKESVAVVGVSSPGKAAKALCTLTDVYLPDLEAYLHPETQSKCWKMMLDFKEVRLMVWRDKTAYFQLEGRYFTWYQLASYASYIRVPVNSTVYLDPCMGPALCNRRVVGSTHWGADLAVTPYDYGAKIILSSAYHGEMPPGYKILACAEFSLDDPVRYKHTWGFESDTAYLYEFTGNGEDWEDYNDAFRARQEGKIYKATATSLKFHFPPGPVIEPTLGLN</sequence>
<organism>
    <name type="scientific">Porcine reproductive and respiratory syndrome virus (strain 16244B)</name>
    <name type="common">PRRSV</name>
    <dbReference type="NCBI Taxonomy" id="300561"/>
    <lineage>
        <taxon>Viruses</taxon>
        <taxon>Riboviria</taxon>
        <taxon>Orthornavirae</taxon>
        <taxon>Pisuviricota</taxon>
        <taxon>Pisoniviricetes</taxon>
        <taxon>Nidovirales</taxon>
        <taxon>Arnidovirineae</taxon>
        <taxon>Arteriviridae</taxon>
        <taxon>Variarterivirinae</taxon>
        <taxon>Betaarterivirus</taxon>
        <taxon>Ampobartevirus</taxon>
        <taxon>Betaarterivirus americense</taxon>
    </lineage>
</organism>
<protein>
    <recommendedName>
        <fullName>Replicase polyprotein 1ab</fullName>
    </recommendedName>
    <alternativeName>
        <fullName>ORF1ab polyprotein</fullName>
    </alternativeName>
    <component>
        <recommendedName>
            <fullName>Nsp1</fullName>
            <ecNumber>3.4.22.-</ecNumber>
        </recommendedName>
    </component>
    <component>
        <recommendedName>
            <fullName>Nsp1-alpha papain-like cysteine proteinase</fullName>
            <ecNumber>3.4.22.-</ecNumber>
        </recommendedName>
        <alternativeName>
            <fullName>PCP1-alpha</fullName>
        </alternativeName>
    </component>
    <component>
        <recommendedName>
            <fullName>Nsp1-beta papain-like cysteine proteinase</fullName>
            <ecNumber>3.4.22.-</ecNumber>
        </recommendedName>
        <alternativeName>
            <fullName>PCP1-beta</fullName>
        </alternativeName>
    </component>
    <component>
        <recommendedName>
            <fullName>Nsp2 cysteine proteinase</fullName>
            <ecNumber>3.4.19.12</ecNumber>
            <ecNumber>3.4.22.-</ecNumber>
        </recommendedName>
        <alternativeName>
            <fullName>CP2</fullName>
            <shortName>CP</shortName>
        </alternativeName>
    </component>
    <component>
        <recommendedName>
            <fullName>Non-structural protein 3</fullName>
            <shortName>Nsp3</shortName>
        </recommendedName>
    </component>
    <component>
        <recommendedName>
            <fullName>Serine protease nsp4</fullName>
            <shortName>3CLSP</shortName>
            <ecNumber>3.4.21.-</ecNumber>
        </recommendedName>
        <alternativeName>
            <fullName>3C-like serine proteinase</fullName>
        </alternativeName>
        <alternativeName>
            <fullName>Nsp4</fullName>
        </alternativeName>
    </component>
    <component>
        <recommendedName>
            <fullName>Non-structural protein 5-6-7</fullName>
            <shortName>Nsp5-6-7</shortName>
        </recommendedName>
    </component>
    <component>
        <recommendedName>
            <fullName>Non-structural protein 5</fullName>
            <shortName>Nsp5</shortName>
        </recommendedName>
    </component>
    <component>
        <recommendedName>
            <fullName>Non-structural protein 6</fullName>
            <shortName>Nsp6</shortName>
        </recommendedName>
    </component>
    <component>
        <recommendedName>
            <fullName>Non-structural protein 7-alpha</fullName>
            <shortName>Nsp7-alpha</shortName>
        </recommendedName>
    </component>
    <component>
        <recommendedName>
            <fullName>Non-structural protein 7-beta</fullName>
            <shortName>Nsp7-beta</shortName>
        </recommendedName>
    </component>
    <component>
        <recommendedName>
            <fullName>Non-structural protein 8</fullName>
            <shortName>Nsp8</shortName>
        </recommendedName>
    </component>
    <component>
        <recommendedName>
            <fullName>RNA-directed RNA polymerase</fullName>
            <shortName>Pol</shortName>
            <shortName>RdRp</shortName>
            <ecNumber>2.7.7.48</ecNumber>
        </recommendedName>
        <alternativeName>
            <fullName>Nsp9</fullName>
        </alternativeName>
    </component>
    <component>
        <recommendedName>
            <fullName>Helicase nsp10</fullName>
            <shortName>Hel</shortName>
            <ecNumber>3.6.4.12</ecNumber>
            <ecNumber>3.6.4.13</ecNumber>
        </recommendedName>
        <alternativeName>
            <fullName>Nsp10</fullName>
        </alternativeName>
    </component>
    <component>
        <recommendedName>
            <fullName>Uridylate-specific endoribonuclease nsp11</fullName>
            <ecNumber>4.6.1.-</ecNumber>
        </recommendedName>
        <alternativeName>
            <fullName>Non-structural protein 11</fullName>
            <shortName>Nsp11</shortName>
        </alternativeName>
    </component>
    <component>
        <recommendedName>
            <fullName>Non-structural protein 12</fullName>
            <shortName>Nsp12</shortName>
        </recommendedName>
    </component>
</protein>
<reference key="1">
    <citation type="journal article" date="1999" name="J. Gen. Virol.">
        <title>North American and European porcine reproductive and respiratory syndrome viruses differ in non-structural protein coding regions.</title>
        <authorList>
            <person name="Allende R."/>
            <person name="Lewis T.L."/>
            <person name="Lu Z."/>
            <person name="Rock D.L."/>
            <person name="Kutish G.F."/>
            <person name="Ali A."/>
            <person name="Doster A.R."/>
            <person name="Osorio F.A."/>
        </authorList>
    </citation>
    <scope>NUCLEOTIDE SEQUENCE [GENOMIC RNA]</scope>
</reference>
<comment type="function">
    <molecule>Replicase polyprotein 1ab</molecule>
    <text>Contains the activities necessary for the transcription of negative stranded RNA, leader RNA, subgenomic mRNAs and progeny virion RNA as well as proteinases responsible for the cleavage of the polyprotein into functional products.</text>
</comment>
<comment type="function">
    <molecule>Nsp1-alpha papain-like cysteine proteinase</molecule>
    <text evidence="6">Inhibits host IFN-beta production. Plays a role in the degradation of the host transcriptional activator CREBBP protein. The degradation of host CREBBP which is a key component of the IFN enhanceosome is likely responsible for the inhibition of interferon mediated by Nsp1-alpha. Also participates in the inhibition of host NF-kappa-B activation by counteracting LUBAC-dependent induction of NF-kappa-B. Reduces host NEMO ubiquitination by blocking the interaction between the two LUBAC complex components RNF31 and SHARPIN.</text>
</comment>
<comment type="function">
    <molecule>Nsp1-beta papain-like cysteine proteinase</molecule>
    <text evidence="3 6 7">Plays a role in blocking host mRNA nuclear export to the cytoplasm and subversion of host protein synthesis (By similarity). Additionally, inhibits the interferon-activated JAK/STAT signal transduction by mediating the ubiquitination and subsequent proteasomal degradation of host KPNA1 (By similarity). Repurposes the host antiviral stress granules into a proviral platform to counteract the EIF2AK2/PKR restriction, thereby regulating the host inflammatory response (By similarity).</text>
</comment>
<comment type="function">
    <molecule>Nsp2 cysteine proteinase</molecule>
    <text evidence="2">Multifunctional protein that acts as a viral protease and as a viral antagonist of host immune response. Cleaves the nsp2/nsp3 site in the viral polyprotein. Displays deubiquitinating activity that cleaves both ubiquitinated and ISGylated products and therefore inhibits ubiquitin and ISG15-dependent host innate immunity. Also deubiquinates host NFKBIA, thereby interfering with NFKBIA degradation and impairing subsequent NF-kappa-B activation.</text>
</comment>
<comment type="function">
    <molecule>Non-structural protein 3</molecule>
    <text evidence="6">Plays a role in the inhibition of the immune response by interacting with host IFITM1. This interaction leads to the proteasomal degradation of the IFN-induced antiviral protein IFITM1.</text>
</comment>
<comment type="function">
    <molecule>Serine protease nsp4</molecule>
    <text evidence="6">Cleaves the majority of cleavage sites present in the C-terminus of the polyprotein. Triggers host apoptosis through caspase-3, -8, and -9 activations. Subverts host innate immune responses through its protease activity. Targets the NF-kappa-B essential modulator NEMO and mediates its cleavage. Blocks host interferon beta induction and downstream signaling by cleaving mitochondrial MAVS, dislodging it from the mitochondria. Impairs host defense by cleaving host mRNA-decapping enzyme DCP1A to attenuate its antiviral activity.</text>
</comment>
<comment type="function">
    <molecule>Non-structural protein 5-6-7</molecule>
    <text evidence="6">Plays a role in the initial induction of autophagosomes from host endoplasmic reticulum.</text>
</comment>
<comment type="function">
    <molecule>Non-structural protein 5</molecule>
    <text evidence="6">Plays a role in the inhibition of host STAT3 signaling pathway by inducing the degradation of STAT3.</text>
</comment>
<comment type="function">
    <molecule>RNA-directed RNA polymerase</molecule>
    <text evidence="6">Responsible for replication and transcription of the viral RNA genome.</text>
</comment>
<comment type="function">
    <molecule>Helicase nsp10</molecule>
    <text evidence="6">Displays RNA and DNA duplex-unwinding activities with 5' to 3' polarity.</text>
</comment>
<comment type="function">
    <molecule>Uridylate-specific endoribonuclease nsp11</molecule>
    <text evidence="4 5 6">Plays a role in viral transcription/replication and prevents the simultaneous activation of host cell dsRNA sensors, such as MDA5/IFIH1, OAS, PKR (By similarity) and NLRP3 inflammasome (By similarity). Acts by degrading the 5'-polyuridines generated during replication of the poly(A) region of viral genomic and subgenomic RNAs. Catalyzes a two-step reaction in which a 2'3'-cyclic phosphate (2'3'-cP) is first generated by 2'-O transesterification, which is then hydrolyzed to a 3'-phosphate (3'-P) (By similarity). If not degraded, poly(U) RNA would hybridize with poly(A) RNA tails and activate host dsRNA sensors (By similarity). Also plays a role in the inhibition of host type I interferon production by recruiting host OTULIN to promote removal of linear ubiquitination targeting host NEMO (By similarity).</text>
</comment>
<comment type="catalytic activity">
    <molecule>RNA-directed RNA polymerase</molecule>
    <reaction evidence="9">
        <text>RNA(n) + a ribonucleoside 5'-triphosphate = RNA(n+1) + diphosphate</text>
        <dbReference type="Rhea" id="RHEA:21248"/>
        <dbReference type="Rhea" id="RHEA-COMP:14527"/>
        <dbReference type="Rhea" id="RHEA-COMP:17342"/>
        <dbReference type="ChEBI" id="CHEBI:33019"/>
        <dbReference type="ChEBI" id="CHEBI:61557"/>
        <dbReference type="ChEBI" id="CHEBI:140395"/>
        <dbReference type="EC" id="2.7.7.48"/>
    </reaction>
</comment>
<comment type="catalytic activity">
    <molecule>Helicase nsp10</molecule>
    <reaction evidence="6">
        <text>ATP + H2O = ADP + phosphate + H(+)</text>
        <dbReference type="Rhea" id="RHEA:13065"/>
        <dbReference type="ChEBI" id="CHEBI:15377"/>
        <dbReference type="ChEBI" id="CHEBI:15378"/>
        <dbReference type="ChEBI" id="CHEBI:30616"/>
        <dbReference type="ChEBI" id="CHEBI:43474"/>
        <dbReference type="ChEBI" id="CHEBI:456216"/>
        <dbReference type="EC" id="3.6.4.12"/>
    </reaction>
</comment>
<comment type="catalytic activity">
    <molecule>Helicase nsp10</molecule>
    <reaction evidence="6">
        <text>ATP + H2O = ADP + phosphate + H(+)</text>
        <dbReference type="Rhea" id="RHEA:13065"/>
        <dbReference type="ChEBI" id="CHEBI:15377"/>
        <dbReference type="ChEBI" id="CHEBI:15378"/>
        <dbReference type="ChEBI" id="CHEBI:30616"/>
        <dbReference type="ChEBI" id="CHEBI:43474"/>
        <dbReference type="ChEBI" id="CHEBI:456216"/>
        <dbReference type="EC" id="3.6.4.13"/>
    </reaction>
</comment>
<comment type="catalytic activity">
    <molecule>Nsp2 cysteine proteinase</molecule>
    <reaction evidence="6">
        <text>Thiol-dependent hydrolysis of ester, thioester, amide, peptide and isopeptide bonds formed by the C-terminal Gly of ubiquitin (a 76-residue protein attached to proteins as an intracellular targeting signal).</text>
        <dbReference type="EC" id="3.4.19.12"/>
    </reaction>
</comment>
<comment type="catalytic activity">
    <molecule>Uridylate-specific endoribonuclease nsp11</molecule>
    <reaction evidence="5">
        <text>uridylyl-uridylyl-ribonucleotide-RNA = a 3'-end uridylyl-2',3'-cyclophospho-uridine-RNA + a 5'-end dephospho-ribonucleoside-RNA</text>
        <dbReference type="Rhea" id="RHEA:67732"/>
        <dbReference type="Rhea" id="RHEA-COMP:13936"/>
        <dbReference type="Rhea" id="RHEA-COMP:17334"/>
        <dbReference type="Rhea" id="RHEA-COMP:17335"/>
        <dbReference type="ChEBI" id="CHEBI:138284"/>
        <dbReference type="ChEBI" id="CHEBI:173079"/>
        <dbReference type="ChEBI" id="CHEBI:173080"/>
    </reaction>
</comment>
<comment type="subunit">
    <text evidence="6">Nsp1-alpha papain-like: Interacts with host RNF31.</text>
</comment>
<comment type="subunit">
    <molecule>Nsp1-beta papain-like cysteine proteinase</molecule>
    <text evidence="3">Interacts with host EIF2AK2; this interaction occurs in host stress granules and leads to EIF2AK2 inhibition. Interacts with host G3BP1; this interaction probably plays a role in Nsp1-beta-mediated inhibition of host EIF2AK2.</text>
</comment>
<comment type="subunit">
    <molecule>Nsp2 cysteine proteinase</molecule>
    <text evidence="6">Interacts with host DDX18; this interaction redistributes host DDX18 to the cytoplasm.</text>
</comment>
<comment type="subunit">
    <molecule>Non-structural protein 3</molecule>
    <text evidence="6">Interacts with host IFITM1.</text>
</comment>
<comment type="subunit">
    <molecule>RNA-directed RNA polymerase</molecule>
    <text evidence="6">Interacts with host DDX5.</text>
</comment>
<comment type="subunit">
    <molecule>Helicase nsp10</molecule>
    <text evidence="6">Interacts with host DDX18; this interaction redistributes host DDX18 to the cytoplasm.</text>
</comment>
<comment type="subunit">
    <molecule>Uridylate-specific endoribonuclease nsp11</molecule>
    <text evidence="6">Interacts with host OTULIN.</text>
</comment>
<comment type="subunit">
    <molecule>Non-structural protein 12</molecule>
    <text evidence="6">Interacts with host LGALS3.</text>
</comment>
<comment type="subcellular location">
    <molecule>Nsp1</molecule>
    <subcellularLocation>
        <location evidence="6">Host nucleus</location>
    </subcellularLocation>
    <subcellularLocation>
        <location evidence="6">Host cytoplasm</location>
    </subcellularLocation>
</comment>
<comment type="subcellular location">
    <molecule>Nsp1-alpha papain-like cysteine proteinase</molecule>
    <subcellularLocation>
        <location evidence="6">Host nucleus</location>
    </subcellularLocation>
    <subcellularLocation>
        <location evidence="6">Host cytoplasm</location>
    </subcellularLocation>
</comment>
<comment type="subcellular location">
    <molecule>Nsp1-beta papain-like cysteine proteinase</molecule>
    <subcellularLocation>
        <location evidence="3">Host nucleus</location>
    </subcellularLocation>
    <subcellularLocation>
        <location evidence="3">Host cytoplasm</location>
    </subcellularLocation>
    <text evidence="3">Accumulates mainly in the host cytoplasm in early infection and then mostly in the host nucleus.</text>
</comment>
<comment type="subcellular location">
    <molecule>Nsp2 cysteine proteinase</molecule>
    <subcellularLocation>
        <location evidence="6">Host cytoplasm</location>
    </subcellularLocation>
    <subcellularLocation>
        <location evidence="6">Host membrane</location>
        <topology evidence="6">Multi-pass membrane protein</topology>
    </subcellularLocation>
</comment>
<comment type="subcellular location">
    <molecule>Non-structural protein 5-6-7</molecule>
    <subcellularLocation>
        <location evidence="6">Host endoplasmic reticulum</location>
    </subcellularLocation>
    <subcellularLocation>
        <location evidence="6">Host membrane</location>
        <topology evidence="6">Multi-pass membrane protein</topology>
    </subcellularLocation>
</comment>
<comment type="subcellular location">
    <molecule>Serine protease nsp4</molecule>
    <subcellularLocation>
        <location evidence="6">Host cytoplasm</location>
    </subcellularLocation>
</comment>
<comment type="subcellular location">
    <molecule>RNA-directed RNA polymerase</molecule>
    <subcellularLocation>
        <location evidence="6">Host cytoplasm</location>
    </subcellularLocation>
    <subcellularLocation>
        <location evidence="6">Host cytoplasm</location>
        <location evidence="6">Host perinuclear region</location>
    </subcellularLocation>
</comment>
<comment type="subcellular location">
    <molecule>Helicase nsp10</molecule>
    <subcellularLocation>
        <location evidence="6">Host cytoplasm</location>
    </subcellularLocation>
    <subcellularLocation>
        <location evidence="6">Host cytoplasm</location>
        <location evidence="6">Host perinuclear region</location>
    </subcellularLocation>
</comment>
<comment type="subcellular location">
    <molecule>Uridylate-specific endoribonuclease nsp11</molecule>
    <subcellularLocation>
        <location evidence="6">Host cytoplasm</location>
    </subcellularLocation>
    <subcellularLocation>
        <location evidence="6">Host nucleus</location>
    </subcellularLocation>
</comment>
<comment type="subcellular location">
    <molecule>Non-structural protein 12</molecule>
    <subcellularLocation>
        <location evidence="6">Host cytoplasm</location>
    </subcellularLocation>
</comment>
<comment type="alternative products">
    <event type="ribosomal frameshifting"/>
    <isoform>
        <id>Q9YN02-1</id>
        <name>Replicase polyprotein 1ab</name>
        <name>pp1ab</name>
        <sequence type="displayed"/>
    </isoform>
    <isoform>
        <id>Q9YN02-2</id>
        <name>Replicase polyprotein 1a</name>
        <name>pp1a</name>
        <name>ORF1a polyprotein</name>
        <sequence type="described" ref="VSP_032890"/>
    </isoform>
</comment>
<comment type="domain">
    <text evidence="1">The hydrophobic domains (HD) could mediate the membrane association of the replication complex and thereby alter the architecture of the host cell membrane.</text>
</comment>
<comment type="domain">
    <text evidence="1">The OTU-like region is responsible for the deubiquitinating and deISGylation activities of Nsp2.</text>
</comment>
<comment type="PTM">
    <molecule>Replicase polyprotein 1ab</molecule>
    <text evidence="7">Specific enzymatic cleavages in vivo by its own proteases yield mature proteins. Nsp1 is autocleaved into two subunits, Nsp1-alpha and Nsp1-beta. There are two alternative pathways for processing. Either nsp4-5 is cleaved, which represents the major pathway or the nsp5-6 and nsp6-7 are processed, which represents the minor pathway. The major pathway occurs when nsp2 acts as a cofactor for nsp4.</text>
</comment>
<comment type="miscellaneous">
    <molecule>Isoform Replicase polyprotein 1ab</molecule>
    <text>Produced by -1 ribosomal frameshifting at the 1a-1b genes boundary.</text>
</comment>
<comment type="miscellaneous">
    <molecule>Isoform Replicase polyprotein 1a</molecule>
    <text evidence="19">Produced by conventional translation.</text>
</comment>
<comment type="similarity">
    <text evidence="19">Belongs to the arteriviridae polyprotein family.</text>
</comment>
<comment type="sequence caution" evidence="19">
    <conflict type="erroneous initiation">
        <sequence resource="EMBL-CDS" id="AAC64692"/>
    </conflict>
</comment>
<organismHost>
    <name type="scientific">Sus scrofa</name>
    <name type="common">Pig</name>
    <dbReference type="NCBI Taxonomy" id="9823"/>
</organismHost>
<evidence type="ECO:0000250" key="1"/>
<evidence type="ECO:0000250" key="2">
    <source>
        <dbReference type="UniProtKB" id="A0MD28"/>
    </source>
</evidence>
<evidence type="ECO:0000250" key="3">
    <source>
        <dbReference type="UniProtKB" id="A6YQT5"/>
    </source>
</evidence>
<evidence type="ECO:0000250" key="4">
    <source>
        <dbReference type="UniProtKB" id="P0C6X7"/>
    </source>
</evidence>
<evidence type="ECO:0000250" key="5">
    <source>
        <dbReference type="UniProtKB" id="P19811"/>
    </source>
</evidence>
<evidence type="ECO:0000250" key="6">
    <source>
        <dbReference type="UniProtKB" id="Q04561"/>
    </source>
</evidence>
<evidence type="ECO:0000250" key="7">
    <source>
        <dbReference type="UniProtKB" id="Q9WJB2"/>
    </source>
</evidence>
<evidence type="ECO:0000255" key="8"/>
<evidence type="ECO:0000255" key="9">
    <source>
        <dbReference type="PROSITE-ProRule" id="PRU00539"/>
    </source>
</evidence>
<evidence type="ECO:0000255" key="10">
    <source>
        <dbReference type="PROSITE-ProRule" id="PRU00826"/>
    </source>
</evidence>
<evidence type="ECO:0000255" key="11">
    <source>
        <dbReference type="PROSITE-ProRule" id="PRU00871"/>
    </source>
</evidence>
<evidence type="ECO:0000255" key="12">
    <source>
        <dbReference type="PROSITE-ProRule" id="PRU00872"/>
    </source>
</evidence>
<evidence type="ECO:0000255" key="13">
    <source>
        <dbReference type="PROSITE-ProRule" id="PRU00873"/>
    </source>
</evidence>
<evidence type="ECO:0000255" key="14">
    <source>
        <dbReference type="PROSITE-ProRule" id="PRU00985"/>
    </source>
</evidence>
<evidence type="ECO:0000255" key="15">
    <source>
        <dbReference type="PROSITE-ProRule" id="PRU01292"/>
    </source>
</evidence>
<evidence type="ECO:0000255" key="16">
    <source>
        <dbReference type="PROSITE-ProRule" id="PRU01303"/>
    </source>
</evidence>
<evidence type="ECO:0000255" key="17">
    <source>
        <dbReference type="PROSITE-ProRule" id="PRU01306"/>
    </source>
</evidence>
<evidence type="ECO:0000256" key="18">
    <source>
        <dbReference type="SAM" id="MobiDB-lite"/>
    </source>
</evidence>
<evidence type="ECO:0000305" key="19"/>
<evidence type="ECO:0007829" key="20">
    <source>
        <dbReference type="PDB" id="5EYI"/>
    </source>
</evidence>
<gene>
    <name type="primary">rep</name>
    <name type="ORF">1a-1b</name>
</gene>
<accession>Q9YN02</accession>
<accession>Q9YN01</accession>
<dbReference type="EC" id="3.4.22.-"/>
<dbReference type="EC" id="3.4.19.12"/>
<dbReference type="EC" id="3.4.21.-"/>
<dbReference type="EC" id="2.7.7.48"/>
<dbReference type="EC" id="3.6.4.12"/>
<dbReference type="EC" id="3.6.4.13"/>
<dbReference type="EC" id="4.6.1.-"/>
<dbReference type="EMBL" id="AF046869">
    <property type="protein sequence ID" value="AAC64691.1"/>
    <property type="molecule type" value="Genomic_RNA"/>
</dbReference>
<dbReference type="EMBL" id="AF046869">
    <property type="protein sequence ID" value="AAC64692.1"/>
    <property type="status" value="ALT_INIT"/>
    <property type="molecule type" value="Genomic_RNA"/>
</dbReference>
<dbReference type="PDB" id="5EYI">
    <property type="method" value="X-ray"/>
    <property type="resolution" value="2.16 A"/>
    <property type="chains" value="A/B=3586-3808"/>
</dbReference>
<dbReference type="PDB" id="5YLX">
    <property type="method" value="X-ray"/>
    <property type="resolution" value="2.20 A"/>
    <property type="chains" value="C=2703-2711"/>
</dbReference>
<dbReference type="PDBsum" id="5EYI"/>
<dbReference type="PDBsum" id="5YLX"/>
<dbReference type="SMR" id="Q9YN02"/>
<dbReference type="KEGG" id="vg:1494889"/>
<dbReference type="Proteomes" id="UP000170565">
    <property type="component" value="Segment"/>
</dbReference>
<dbReference type="GO" id="GO:0044165">
    <property type="term" value="C:host cell endoplasmic reticulum"/>
    <property type="evidence" value="ECO:0007669"/>
    <property type="project" value="UniProtKB-SubCell"/>
</dbReference>
<dbReference type="GO" id="GO:0033644">
    <property type="term" value="C:host cell membrane"/>
    <property type="evidence" value="ECO:0007669"/>
    <property type="project" value="UniProtKB-SubCell"/>
</dbReference>
<dbReference type="GO" id="GO:0042025">
    <property type="term" value="C:host cell nucleus"/>
    <property type="evidence" value="ECO:0007669"/>
    <property type="project" value="UniProtKB-SubCell"/>
</dbReference>
<dbReference type="GO" id="GO:0044220">
    <property type="term" value="C:host cell perinuclear region of cytoplasm"/>
    <property type="evidence" value="ECO:0007669"/>
    <property type="project" value="UniProtKB-SubCell"/>
</dbReference>
<dbReference type="GO" id="GO:0016020">
    <property type="term" value="C:membrane"/>
    <property type="evidence" value="ECO:0007669"/>
    <property type="project" value="UniProtKB-KW"/>
</dbReference>
<dbReference type="GO" id="GO:0005524">
    <property type="term" value="F:ATP binding"/>
    <property type="evidence" value="ECO:0007669"/>
    <property type="project" value="UniProtKB-KW"/>
</dbReference>
<dbReference type="GO" id="GO:0016887">
    <property type="term" value="F:ATP hydrolysis activity"/>
    <property type="evidence" value="ECO:0007669"/>
    <property type="project" value="RHEA"/>
</dbReference>
<dbReference type="GO" id="GO:0004843">
    <property type="term" value="F:cysteine-type deubiquitinase activity"/>
    <property type="evidence" value="ECO:0007669"/>
    <property type="project" value="UniProtKB-EC"/>
</dbReference>
<dbReference type="GO" id="GO:0004197">
    <property type="term" value="F:cysteine-type endopeptidase activity"/>
    <property type="evidence" value="ECO:0007669"/>
    <property type="project" value="InterPro"/>
</dbReference>
<dbReference type="GO" id="GO:0004519">
    <property type="term" value="F:endonuclease activity"/>
    <property type="evidence" value="ECO:0007669"/>
    <property type="project" value="UniProtKB-KW"/>
</dbReference>
<dbReference type="GO" id="GO:0016829">
    <property type="term" value="F:lyase activity"/>
    <property type="evidence" value="ECO:0007669"/>
    <property type="project" value="UniProtKB-KW"/>
</dbReference>
<dbReference type="GO" id="GO:0030291">
    <property type="term" value="F:protein serine/threonine kinase inhibitor activity"/>
    <property type="evidence" value="ECO:0007669"/>
    <property type="project" value="UniProtKB-KW"/>
</dbReference>
<dbReference type="GO" id="GO:0003723">
    <property type="term" value="F:RNA binding"/>
    <property type="evidence" value="ECO:0007669"/>
    <property type="project" value="InterPro"/>
</dbReference>
<dbReference type="GO" id="GO:0003724">
    <property type="term" value="F:RNA helicase activity"/>
    <property type="evidence" value="ECO:0007669"/>
    <property type="project" value="UniProtKB-EC"/>
</dbReference>
<dbReference type="GO" id="GO:0004540">
    <property type="term" value="F:RNA nuclease activity"/>
    <property type="evidence" value="ECO:0007669"/>
    <property type="project" value="UniProtKB-ARBA"/>
</dbReference>
<dbReference type="GO" id="GO:0003968">
    <property type="term" value="F:RNA-directed RNA polymerase activity"/>
    <property type="evidence" value="ECO:0007669"/>
    <property type="project" value="UniProtKB-KW"/>
</dbReference>
<dbReference type="GO" id="GO:0004252">
    <property type="term" value="F:serine-type endopeptidase activity"/>
    <property type="evidence" value="ECO:0007669"/>
    <property type="project" value="InterPro"/>
</dbReference>
<dbReference type="GO" id="GO:0008270">
    <property type="term" value="F:zinc ion binding"/>
    <property type="evidence" value="ECO:0007669"/>
    <property type="project" value="UniProtKB-KW"/>
</dbReference>
<dbReference type="GO" id="GO:0006351">
    <property type="term" value="P:DNA-templated transcription"/>
    <property type="evidence" value="ECO:0007669"/>
    <property type="project" value="InterPro"/>
</dbReference>
<dbReference type="GO" id="GO:0006508">
    <property type="term" value="P:proteolysis"/>
    <property type="evidence" value="ECO:0007669"/>
    <property type="project" value="UniProtKB-KW"/>
</dbReference>
<dbReference type="GO" id="GO:0039648">
    <property type="term" value="P:symbiont-mediated perturbation of host ubiquitin-like protein modification"/>
    <property type="evidence" value="ECO:0007669"/>
    <property type="project" value="UniProtKB-KW"/>
</dbReference>
<dbReference type="GO" id="GO:0039579">
    <property type="term" value="P:symbiont-mediated suppression of host ISG15-protein conjugation"/>
    <property type="evidence" value="ECO:0007669"/>
    <property type="project" value="UniProtKB-KW"/>
</dbReference>
<dbReference type="GO" id="GO:0039563">
    <property type="term" value="P:symbiont-mediated suppression of host JAK-STAT cascade via inhibition of STAT1 activity"/>
    <property type="evidence" value="ECO:0007669"/>
    <property type="project" value="UniProtKB-KW"/>
</dbReference>
<dbReference type="GO" id="GO:0085034">
    <property type="term" value="P:symbiont-mediated suppression of host NF-kappaB cascade"/>
    <property type="evidence" value="ECO:0007669"/>
    <property type="project" value="UniProtKB-KW"/>
</dbReference>
<dbReference type="GO" id="GO:0039580">
    <property type="term" value="P:symbiont-mediated suppression of host PKR/eIFalpha signaling"/>
    <property type="evidence" value="ECO:0007669"/>
    <property type="project" value="UniProtKB-KW"/>
</dbReference>
<dbReference type="GO" id="GO:0039502">
    <property type="term" value="P:symbiont-mediated suppression of host type I interferon-mediated signaling pathway"/>
    <property type="evidence" value="ECO:0007669"/>
    <property type="project" value="UniProtKB-KW"/>
</dbReference>
<dbReference type="GO" id="GO:0019082">
    <property type="term" value="P:viral protein processing"/>
    <property type="evidence" value="ECO:0007669"/>
    <property type="project" value="InterPro"/>
</dbReference>
<dbReference type="GO" id="GO:0039694">
    <property type="term" value="P:viral RNA genome replication"/>
    <property type="evidence" value="ECO:0007669"/>
    <property type="project" value="InterPro"/>
</dbReference>
<dbReference type="GO" id="GO:0075523">
    <property type="term" value="P:viral translational frameshifting"/>
    <property type="evidence" value="ECO:0007669"/>
    <property type="project" value="UniProtKB-KW"/>
</dbReference>
<dbReference type="CDD" id="cd21410">
    <property type="entry name" value="1B_av_Nsp10-like"/>
    <property type="match status" value="1"/>
</dbReference>
<dbReference type="CDD" id="cd23189">
    <property type="entry name" value="Arteriviridae_RdRp"/>
    <property type="match status" value="1"/>
</dbReference>
<dbReference type="CDD" id="cd22528">
    <property type="entry name" value="av_Nsp3_ER-remodelling"/>
    <property type="match status" value="1"/>
</dbReference>
<dbReference type="CDD" id="cd17937">
    <property type="entry name" value="DEXXYc_viral_SF1-N"/>
    <property type="match status" value="1"/>
</dbReference>
<dbReference type="CDD" id="cd21160">
    <property type="entry name" value="NendoU_av_Nsp11-like"/>
    <property type="match status" value="1"/>
</dbReference>
<dbReference type="CDD" id="cd21166">
    <property type="entry name" value="NTD_av_Nsp11-like"/>
    <property type="match status" value="1"/>
</dbReference>
<dbReference type="CDD" id="cd18786">
    <property type="entry name" value="SF1_C"/>
    <property type="match status" value="1"/>
</dbReference>
<dbReference type="CDD" id="cd21405">
    <property type="entry name" value="ZBD_av_Nsp10-like"/>
    <property type="match status" value="1"/>
</dbReference>
<dbReference type="Gene3D" id="3.90.70.160">
    <property type="match status" value="1"/>
</dbReference>
<dbReference type="Gene3D" id="4.10.80.390">
    <property type="match status" value="1"/>
</dbReference>
<dbReference type="Gene3D" id="3.30.1330.220">
    <property type="entry name" value="Arterivirus nonstructural protein 7 alpha"/>
    <property type="match status" value="1"/>
</dbReference>
<dbReference type="Gene3D" id="2.30.31.30">
    <property type="entry name" value="Arterivirus nps1beta, nuclease domain"/>
    <property type="match status" value="1"/>
</dbReference>
<dbReference type="Gene3D" id="3.90.70.70">
    <property type="entry name" value="Arterivirus papain-like cysteine protease beta domain"/>
    <property type="match status" value="1"/>
</dbReference>
<dbReference type="Gene3D" id="3.30.40.20">
    <property type="entry name" value="Chymotrypsin-like serine protease, domain 3"/>
    <property type="match status" value="1"/>
</dbReference>
<dbReference type="Gene3D" id="3.40.50.300">
    <property type="entry name" value="P-loop containing nucleotide triphosphate hydrolases"/>
    <property type="match status" value="1"/>
</dbReference>
<dbReference type="Gene3D" id="3.90.70.60">
    <property type="entry name" value="Porcine arterivirus-type cysteine proteinase alpha domain"/>
    <property type="match status" value="1"/>
</dbReference>
<dbReference type="Gene3D" id="2.40.10.10">
    <property type="entry name" value="Trypsin-like serine proteases"/>
    <property type="match status" value="2"/>
</dbReference>
<dbReference type="InterPro" id="IPR027351">
    <property type="entry name" value="(+)RNA_virus_helicase_core_dom"/>
</dbReference>
<dbReference type="InterPro" id="IPR031932">
    <property type="entry name" value="Arteri_nsp7a"/>
</dbReference>
<dbReference type="InterPro" id="IPR038451">
    <property type="entry name" value="Arteri_nsp7a_sf"/>
</dbReference>
<dbReference type="InterPro" id="IPR008743">
    <property type="entry name" value="Arterivirus_Nsp2_C33"/>
</dbReference>
<dbReference type="InterPro" id="IPR023338">
    <property type="entry name" value="Arterivirus_NSP4_peptidase"/>
</dbReference>
<dbReference type="InterPro" id="IPR046440">
    <property type="entry name" value="AV_NSP11N_COV_NSP15M"/>
</dbReference>
<dbReference type="InterPro" id="IPR008741">
    <property type="entry name" value="AV_PCPalpha"/>
</dbReference>
<dbReference type="InterPro" id="IPR038155">
    <property type="entry name" value="AV_PCPalpha_sf"/>
</dbReference>
<dbReference type="InterPro" id="IPR025773">
    <property type="entry name" value="AV_PCPbeta"/>
</dbReference>
<dbReference type="InterPro" id="IPR038154">
    <property type="entry name" value="AV_PCPbeta_sf"/>
</dbReference>
<dbReference type="InterPro" id="IPR023183">
    <property type="entry name" value="Chymotrypsin-like_C"/>
</dbReference>
<dbReference type="InterPro" id="IPR043502">
    <property type="entry name" value="DNA/RNA_pol_sf"/>
</dbReference>
<dbReference type="InterPro" id="IPR008760">
    <property type="entry name" value="EAV_peptidase_S32"/>
</dbReference>
<dbReference type="InterPro" id="IPR037227">
    <property type="entry name" value="EndoU-like"/>
</dbReference>
<dbReference type="InterPro" id="IPR043609">
    <property type="entry name" value="NendoU_nidovirus"/>
</dbReference>
<dbReference type="InterPro" id="IPR044863">
    <property type="entry name" value="NIRAN"/>
</dbReference>
<dbReference type="InterPro" id="IPR044348">
    <property type="entry name" value="NSP10_1B_Av"/>
</dbReference>
<dbReference type="InterPro" id="IPR027355">
    <property type="entry name" value="NSP10_Av_ZBD"/>
</dbReference>
<dbReference type="InterPro" id="IPR044320">
    <property type="entry name" value="NSP11_Av_N"/>
</dbReference>
<dbReference type="InterPro" id="IPR044314">
    <property type="entry name" value="NSP11_NendoU_Av"/>
</dbReference>
<dbReference type="InterPro" id="IPR054104">
    <property type="entry name" value="Nsp1alpha_Znf"/>
</dbReference>
<dbReference type="InterPro" id="IPR032855">
    <property type="entry name" value="NSP2-B_epitope"/>
</dbReference>
<dbReference type="InterPro" id="IPR027417">
    <property type="entry name" value="P-loop_NTPase"/>
</dbReference>
<dbReference type="InterPro" id="IPR032785">
    <property type="entry name" value="Pdase_C33_assoc"/>
</dbReference>
<dbReference type="InterPro" id="IPR009003">
    <property type="entry name" value="Peptidase_S1_PA"/>
</dbReference>
<dbReference type="InterPro" id="IPR043504">
    <property type="entry name" value="Peptidase_S1_PA_chymotrypsin"/>
</dbReference>
<dbReference type="InterPro" id="IPR001205">
    <property type="entry name" value="RNA-dir_pol_C"/>
</dbReference>
<dbReference type="InterPro" id="IPR007094">
    <property type="entry name" value="RNA-dir_pol_PSvirus"/>
</dbReference>
<dbReference type="Pfam" id="PF16749">
    <property type="entry name" value="Arteri_nsp7a"/>
    <property type="match status" value="1"/>
</dbReference>
<dbReference type="Pfam" id="PF19215">
    <property type="entry name" value="CoV_NSP15_C"/>
    <property type="match status" value="1"/>
</dbReference>
<dbReference type="Pfam" id="PF14757">
    <property type="entry name" value="NSP2-B_epitope"/>
    <property type="match status" value="1"/>
</dbReference>
<dbReference type="Pfam" id="PF14756">
    <property type="entry name" value="Pdase_C33_assoc"/>
    <property type="match status" value="1"/>
</dbReference>
<dbReference type="Pfam" id="PF05410">
    <property type="entry name" value="Peptidase_C31"/>
    <property type="match status" value="1"/>
</dbReference>
<dbReference type="Pfam" id="PF05411">
    <property type="entry name" value="Peptidase_C32"/>
    <property type="match status" value="1"/>
</dbReference>
<dbReference type="Pfam" id="PF05412">
    <property type="entry name" value="Peptidase_C33"/>
    <property type="match status" value="1"/>
</dbReference>
<dbReference type="Pfam" id="PF05579">
    <property type="entry name" value="Peptidase_S32"/>
    <property type="match status" value="1"/>
</dbReference>
<dbReference type="Pfam" id="PF22049">
    <property type="entry name" value="PRRSV-NSP11_N"/>
    <property type="match status" value="1"/>
</dbReference>
<dbReference type="Pfam" id="PF00680">
    <property type="entry name" value="RdRP_1"/>
    <property type="match status" value="1"/>
</dbReference>
<dbReference type="Pfam" id="PF01443">
    <property type="entry name" value="Viral_helicase1"/>
    <property type="match status" value="1"/>
</dbReference>
<dbReference type="Pfam" id="PF21905">
    <property type="entry name" value="Zf-Nsp1alpha"/>
    <property type="match status" value="1"/>
</dbReference>
<dbReference type="SUPFAM" id="SSF56672">
    <property type="entry name" value="DNA/RNA polymerases"/>
    <property type="match status" value="1"/>
</dbReference>
<dbReference type="SUPFAM" id="SSF142877">
    <property type="entry name" value="EndoU-like"/>
    <property type="match status" value="1"/>
</dbReference>
<dbReference type="SUPFAM" id="SSF52540">
    <property type="entry name" value="P-loop containing nucleoside triphosphate hydrolases"/>
    <property type="match status" value="2"/>
</dbReference>
<dbReference type="SUPFAM" id="SSF50494">
    <property type="entry name" value="Trypsin-like serine proteases"/>
    <property type="match status" value="1"/>
</dbReference>
<dbReference type="PROSITE" id="PS51538">
    <property type="entry name" value="AV_CP"/>
    <property type="match status" value="1"/>
</dbReference>
<dbReference type="PROSITE" id="PS51961">
    <property type="entry name" value="AV_NSP11N_COV_NSP15M"/>
    <property type="match status" value="1"/>
</dbReference>
<dbReference type="PROSITE" id="PS51493">
    <property type="entry name" value="AV_NSP4_PRO"/>
    <property type="match status" value="1"/>
</dbReference>
<dbReference type="PROSITE" id="PS51539">
    <property type="entry name" value="AV_PCP_ALPHA"/>
    <property type="match status" value="1"/>
</dbReference>
<dbReference type="PROSITE" id="PS51540">
    <property type="entry name" value="AV_PCP_BETA"/>
    <property type="match status" value="1"/>
</dbReference>
<dbReference type="PROSITE" id="PS51652">
    <property type="entry name" value="AV_ZBD"/>
    <property type="match status" value="1"/>
</dbReference>
<dbReference type="PROSITE" id="PS51958">
    <property type="entry name" value="NENDOU"/>
    <property type="match status" value="1"/>
</dbReference>
<dbReference type="PROSITE" id="PS51947">
    <property type="entry name" value="NIRAN"/>
    <property type="match status" value="1"/>
</dbReference>
<dbReference type="PROSITE" id="PS51657">
    <property type="entry name" value="PSRV_HELICASE"/>
    <property type="match status" value="1"/>
</dbReference>
<dbReference type="PROSITE" id="PS50507">
    <property type="entry name" value="RDRP_SSRNA_POS"/>
    <property type="match status" value="1"/>
</dbReference>
<proteinExistence type="evidence at protein level"/>